<keyword id="KW-0963">Cytoplasm</keyword>
<keyword id="KW-0489">Methyltransferase</keyword>
<keyword id="KW-0545">Nucleotide biosynthesis</keyword>
<keyword id="KW-0808">Transferase</keyword>
<sequence length="266" mass="30134">MPIPTPYEDLLRLVLDRGTAKSDRTGTGTRSLFGQQLRYDLSAGFPLITTKKVHLKSVVYELLWFLRGDSNVDWLHRHGVTIWDEWASDTGDLGPIYGVQWRSWPTPSGEHIDQISAALDLLRTDPDSRRIIVSAWNVGEIPRMALPPCHAFFQFYVADGRLSCQLYQRSADLFLGVPFNIASYALLTHMMAAQAGLSVGEFVWTGGDCHIYDNHVEQVRLQLSREPRPYPELVLAHRDSIFDYTYDDVVVHNYDPHPAIKAPVAV</sequence>
<dbReference type="EC" id="2.1.1.45" evidence="1"/>
<dbReference type="EMBL" id="CP000479">
    <property type="protein sequence ID" value="ABK67505.1"/>
    <property type="molecule type" value="Genomic_DNA"/>
</dbReference>
<dbReference type="RefSeq" id="WP_009978009.1">
    <property type="nucleotide sequence ID" value="NC_008595.1"/>
</dbReference>
<dbReference type="SMR" id="A0QIU1"/>
<dbReference type="KEGG" id="mav:MAV_3652"/>
<dbReference type="HOGENOM" id="CLU_021669_0_0_11"/>
<dbReference type="UniPathway" id="UPA00575"/>
<dbReference type="Proteomes" id="UP000001574">
    <property type="component" value="Chromosome"/>
</dbReference>
<dbReference type="GO" id="GO:0005829">
    <property type="term" value="C:cytosol"/>
    <property type="evidence" value="ECO:0007669"/>
    <property type="project" value="TreeGrafter"/>
</dbReference>
<dbReference type="GO" id="GO:0004799">
    <property type="term" value="F:thymidylate synthase activity"/>
    <property type="evidence" value="ECO:0007669"/>
    <property type="project" value="UniProtKB-UniRule"/>
</dbReference>
<dbReference type="GO" id="GO:0006231">
    <property type="term" value="P:dTMP biosynthetic process"/>
    <property type="evidence" value="ECO:0007669"/>
    <property type="project" value="UniProtKB-UniRule"/>
</dbReference>
<dbReference type="GO" id="GO:0006235">
    <property type="term" value="P:dTTP biosynthetic process"/>
    <property type="evidence" value="ECO:0007669"/>
    <property type="project" value="UniProtKB-UniRule"/>
</dbReference>
<dbReference type="GO" id="GO:0032259">
    <property type="term" value="P:methylation"/>
    <property type="evidence" value="ECO:0007669"/>
    <property type="project" value="UniProtKB-KW"/>
</dbReference>
<dbReference type="CDD" id="cd00351">
    <property type="entry name" value="TS_Pyrimidine_HMase"/>
    <property type="match status" value="1"/>
</dbReference>
<dbReference type="FunFam" id="3.30.572.10:FF:000001">
    <property type="entry name" value="Thymidylate synthase"/>
    <property type="match status" value="1"/>
</dbReference>
<dbReference type="Gene3D" id="3.30.572.10">
    <property type="entry name" value="Thymidylate synthase/dCMP hydroxymethylase domain"/>
    <property type="match status" value="1"/>
</dbReference>
<dbReference type="HAMAP" id="MF_00008">
    <property type="entry name" value="Thymidy_synth_bact"/>
    <property type="match status" value="1"/>
</dbReference>
<dbReference type="InterPro" id="IPR045097">
    <property type="entry name" value="Thymidate_synth/dCMP_Mease"/>
</dbReference>
<dbReference type="InterPro" id="IPR023451">
    <property type="entry name" value="Thymidate_synth/dCMP_Mease_dom"/>
</dbReference>
<dbReference type="InterPro" id="IPR036926">
    <property type="entry name" value="Thymidate_synth/dCMP_Mease_sf"/>
</dbReference>
<dbReference type="InterPro" id="IPR000398">
    <property type="entry name" value="Thymidylate_synthase"/>
</dbReference>
<dbReference type="InterPro" id="IPR020940">
    <property type="entry name" value="Thymidylate_synthase_AS"/>
</dbReference>
<dbReference type="NCBIfam" id="NF002497">
    <property type="entry name" value="PRK01827.1-3"/>
    <property type="match status" value="1"/>
</dbReference>
<dbReference type="NCBIfam" id="NF002499">
    <property type="entry name" value="PRK01827.1-5"/>
    <property type="match status" value="1"/>
</dbReference>
<dbReference type="NCBIfam" id="TIGR03284">
    <property type="entry name" value="thym_sym"/>
    <property type="match status" value="2"/>
</dbReference>
<dbReference type="PANTHER" id="PTHR11548:SF9">
    <property type="entry name" value="THYMIDYLATE SYNTHASE"/>
    <property type="match status" value="1"/>
</dbReference>
<dbReference type="PANTHER" id="PTHR11548">
    <property type="entry name" value="THYMIDYLATE SYNTHASE 1"/>
    <property type="match status" value="1"/>
</dbReference>
<dbReference type="Pfam" id="PF00303">
    <property type="entry name" value="Thymidylat_synt"/>
    <property type="match status" value="1"/>
</dbReference>
<dbReference type="PRINTS" id="PR00108">
    <property type="entry name" value="THYMDSNTHASE"/>
</dbReference>
<dbReference type="SUPFAM" id="SSF55831">
    <property type="entry name" value="Thymidylate synthase/dCMP hydroxymethylase"/>
    <property type="match status" value="1"/>
</dbReference>
<dbReference type="PROSITE" id="PS00091">
    <property type="entry name" value="THYMIDYLATE_SYNTHASE"/>
    <property type="match status" value="1"/>
</dbReference>
<protein>
    <recommendedName>
        <fullName evidence="1">Thymidylate synthase</fullName>
        <shortName evidence="1">TS</shortName>
        <shortName evidence="1">TSase</shortName>
        <ecNumber evidence="1">2.1.1.45</ecNumber>
    </recommendedName>
</protein>
<accession>A0QIU1</accession>
<organism>
    <name type="scientific">Mycobacterium avium (strain 104)</name>
    <dbReference type="NCBI Taxonomy" id="243243"/>
    <lineage>
        <taxon>Bacteria</taxon>
        <taxon>Bacillati</taxon>
        <taxon>Actinomycetota</taxon>
        <taxon>Actinomycetes</taxon>
        <taxon>Mycobacteriales</taxon>
        <taxon>Mycobacteriaceae</taxon>
        <taxon>Mycobacterium</taxon>
        <taxon>Mycobacterium avium complex (MAC)</taxon>
    </lineage>
</organism>
<evidence type="ECO:0000255" key="1">
    <source>
        <dbReference type="HAMAP-Rule" id="MF_00008"/>
    </source>
</evidence>
<comment type="function">
    <text evidence="1">Catalyzes the reductive methylation of 2'-deoxyuridine-5'-monophosphate (dUMP) to 2'-deoxythymidine-5'-monophosphate (dTMP) while utilizing 5,10-methylenetetrahydrofolate (mTHF) as the methyl donor and reductant in the reaction, yielding dihydrofolate (DHF) as a by-product. This enzymatic reaction provides an intracellular de novo source of dTMP, an essential precursor for DNA biosynthesis.</text>
</comment>
<comment type="catalytic activity">
    <reaction evidence="1">
        <text>dUMP + (6R)-5,10-methylene-5,6,7,8-tetrahydrofolate = 7,8-dihydrofolate + dTMP</text>
        <dbReference type="Rhea" id="RHEA:12104"/>
        <dbReference type="ChEBI" id="CHEBI:15636"/>
        <dbReference type="ChEBI" id="CHEBI:57451"/>
        <dbReference type="ChEBI" id="CHEBI:63528"/>
        <dbReference type="ChEBI" id="CHEBI:246422"/>
        <dbReference type="EC" id="2.1.1.45"/>
    </reaction>
</comment>
<comment type="pathway">
    <text evidence="1">Pyrimidine metabolism; dTTP biosynthesis.</text>
</comment>
<comment type="subunit">
    <text evidence="1">Homodimer.</text>
</comment>
<comment type="subcellular location">
    <subcellularLocation>
        <location evidence="1">Cytoplasm</location>
    </subcellularLocation>
</comment>
<comment type="similarity">
    <text evidence="1">Belongs to the thymidylate synthase family. Bacterial-type ThyA subfamily.</text>
</comment>
<feature type="chain" id="PRO_1000000627" description="Thymidylate synthase">
    <location>
        <begin position="1"/>
        <end position="266"/>
    </location>
</feature>
<feature type="active site" description="Nucleophile" evidence="1">
    <location>
        <position position="149"/>
    </location>
</feature>
<feature type="binding site" description="in other chain" evidence="1">
    <location>
        <position position="24"/>
    </location>
    <ligand>
        <name>dUMP</name>
        <dbReference type="ChEBI" id="CHEBI:246422"/>
        <note>ligand shared between dimeric partners</note>
    </ligand>
</feature>
<feature type="binding site" evidence="1">
    <location>
        <position position="54"/>
    </location>
    <ligand>
        <name>(6R)-5,10-methylene-5,6,7,8-tetrahydrofolate</name>
        <dbReference type="ChEBI" id="CHEBI:15636"/>
    </ligand>
</feature>
<feature type="binding site" evidence="1">
    <location>
        <begin position="129"/>
        <end position="130"/>
    </location>
    <ligand>
        <name>dUMP</name>
        <dbReference type="ChEBI" id="CHEBI:246422"/>
        <note>ligand shared between dimeric partners</note>
    </ligand>
</feature>
<feature type="binding site" description="in other chain" evidence="1">
    <location>
        <begin position="169"/>
        <end position="172"/>
    </location>
    <ligand>
        <name>dUMP</name>
        <dbReference type="ChEBI" id="CHEBI:246422"/>
        <note>ligand shared between dimeric partners</note>
    </ligand>
</feature>
<feature type="binding site" evidence="1">
    <location>
        <position position="172"/>
    </location>
    <ligand>
        <name>(6R)-5,10-methylene-5,6,7,8-tetrahydrofolate</name>
        <dbReference type="ChEBI" id="CHEBI:15636"/>
    </ligand>
</feature>
<feature type="binding site" description="in other chain" evidence="1">
    <location>
        <position position="180"/>
    </location>
    <ligand>
        <name>dUMP</name>
        <dbReference type="ChEBI" id="CHEBI:246422"/>
        <note>ligand shared between dimeric partners</note>
    </ligand>
</feature>
<feature type="binding site" description="in other chain" evidence="1">
    <location>
        <begin position="210"/>
        <end position="212"/>
    </location>
    <ligand>
        <name>dUMP</name>
        <dbReference type="ChEBI" id="CHEBI:246422"/>
        <note>ligand shared between dimeric partners</note>
    </ligand>
</feature>
<feature type="binding site" evidence="1">
    <location>
        <position position="265"/>
    </location>
    <ligand>
        <name>(6R)-5,10-methylene-5,6,7,8-tetrahydrofolate</name>
        <dbReference type="ChEBI" id="CHEBI:15636"/>
    </ligand>
</feature>
<reference key="1">
    <citation type="submission" date="2006-10" db="EMBL/GenBank/DDBJ databases">
        <authorList>
            <person name="Fleischmann R.D."/>
            <person name="Dodson R.J."/>
            <person name="Haft D.H."/>
            <person name="Merkel J.S."/>
            <person name="Nelson W.C."/>
            <person name="Fraser C.M."/>
        </authorList>
    </citation>
    <scope>NUCLEOTIDE SEQUENCE [LARGE SCALE GENOMIC DNA]</scope>
    <source>
        <strain>104</strain>
    </source>
</reference>
<name>TYSY_MYCA1</name>
<gene>
    <name evidence="1" type="primary">thyA</name>
    <name type="ordered locus">MAV_3652</name>
</gene>
<proteinExistence type="inferred from homology"/>